<sequence length="530" mass="60089">MPQKWISALLLLQISFCFRSGNCGKVLVWPLEYSHWMNLKIILDELVQRGHEVTVLRPSSSVSLDPKKASGLVYETSPTTSNNDEVEKSFYPVGDMWTYDVPKYTCLRYYPSLNKMFGQFSDLWLQLCREVVSNKELIAKLKESQFDVVLSDAVGPCGELIAEILQLPFVYSLRFATAPGIEKYSAGQPFPPSYVPIILSGFSGQMTFMERVENMLCLLYFDSWFESFPAKDWDPFFSEILGRPTTMVDTMKKAEIWLIRSYWDLEFPRPSLPNIEFVGGLHCQPAKPLPKEMEDFAQSSGEHGVWVFSLGSMIRNITQERANTIASALAQIPQKVFWRFEGKKPDTLGPNTRVFKWIPQNDLLGHPKTKAFVTHGGANGIYESIHYGIPPMVGIPLFAEQRDNVAHMVAKGAAVSIDFHTMSSSDLLNALKAVINNPSYKKKVMWLSAIHHDQPLKPLDRAVFWIEFVMRHKGAKHLRPLAHNLALVSVHSLDVIGFLLACVLAIVLLAVKCCLFLYRFFVKVAKNKRD</sequence>
<comment type="function">
    <text evidence="2">UDP-glucuronosyltransferase (UGT) that catalyzes phase II biotransformation reactions in which lipophilic substrates are conjugated with glucuronic acid to increase the metabolite's water solubility, thereby facilitating excretion into either the urine or bile. Essential for the elimination and detoxification of drugs, xenobiotics and endogenous compounds. Catalyzes the glucuronidation of endogenous steroid hormones such as androgens (epitestosterone, androsterone) and estrogens (estradiol, epiestradiol, estriol, catechol estrogens). Also regulates the levels of retinoic acid, a major metabolite of vitamin A involved in apoptosis, cellular growth and differentiation, and embryonic development. Contributes to bile acid (BA) detoxification by catalyzing the glucuronidation of BA substrates, which are natural detergents for dietary lipids absorption. Involved in the glucuronidation of arachidonic acid (AA) and AA-derived eicosanoids including 15-HETE, 20-HETE, PGE2, PGB1 and F2-isoprostanes (8-iso-PGF2alpha and 5-epi-5-F2t-IsoP). Involved in the glucuronidation of the phytochemical ferulic acid at the phenolic or the carboxylic acid group. Involved in the glucuronidation of the AGTR1 angiotensin receptor antagonist losartan, caderastan and zolarsatan, drugs which can inhibit the effect of angiotensin II. Also metabolizes mycophenolate, an immunosuppressive agent.</text>
</comment>
<comment type="catalytic activity">
    <reaction evidence="2">
        <text>glucuronate acceptor + UDP-alpha-D-glucuronate = acceptor beta-D-glucuronoside + UDP + H(+)</text>
        <dbReference type="Rhea" id="RHEA:21032"/>
        <dbReference type="ChEBI" id="CHEBI:15378"/>
        <dbReference type="ChEBI" id="CHEBI:58052"/>
        <dbReference type="ChEBI" id="CHEBI:58223"/>
        <dbReference type="ChEBI" id="CHEBI:132367"/>
        <dbReference type="ChEBI" id="CHEBI:132368"/>
        <dbReference type="EC" id="2.4.1.17"/>
    </reaction>
    <physiologicalReaction direction="left-to-right" evidence="2">
        <dbReference type="Rhea" id="RHEA:21033"/>
    </physiologicalReaction>
</comment>
<comment type="catalytic activity">
    <reaction evidence="2">
        <text>17alpha-estradiol + UDP-alpha-D-glucuronate = 17alpha-estradiol 17-O-(beta-D-glucuronate) + UDP + H(+)</text>
        <dbReference type="Rhea" id="RHEA:52872"/>
        <dbReference type="ChEBI" id="CHEBI:15378"/>
        <dbReference type="ChEBI" id="CHEBI:17160"/>
        <dbReference type="ChEBI" id="CHEBI:58052"/>
        <dbReference type="ChEBI" id="CHEBI:58223"/>
        <dbReference type="ChEBI" id="CHEBI:136642"/>
    </reaction>
    <physiologicalReaction direction="left-to-right" evidence="2">
        <dbReference type="Rhea" id="RHEA:52873"/>
    </physiologicalReaction>
</comment>
<comment type="catalytic activity">
    <reaction evidence="2">
        <text>17beta-estradiol + UDP-alpha-D-glucuronate = 17beta-estradiol 17-O-(beta-D-glucuronate) + UDP + H(+)</text>
        <dbReference type="Rhea" id="RHEA:52464"/>
        <dbReference type="ChEBI" id="CHEBI:15378"/>
        <dbReference type="ChEBI" id="CHEBI:16469"/>
        <dbReference type="ChEBI" id="CHEBI:58052"/>
        <dbReference type="ChEBI" id="CHEBI:58223"/>
        <dbReference type="ChEBI" id="CHEBI:82961"/>
    </reaction>
    <physiologicalReaction direction="left-to-right" evidence="2">
        <dbReference type="Rhea" id="RHEA:52465"/>
    </physiologicalReaction>
</comment>
<comment type="catalytic activity">
    <reaction evidence="2">
        <text>2-hydroxy-17beta-estradiol + UDP-alpha-D-glucuronate = 2-hydroxy-17beta-estradiol 3-O-(beta-D-glucuronate) + UDP + H(+)</text>
        <dbReference type="Rhea" id="RHEA:53004"/>
        <dbReference type="ChEBI" id="CHEBI:15378"/>
        <dbReference type="ChEBI" id="CHEBI:28744"/>
        <dbReference type="ChEBI" id="CHEBI:58052"/>
        <dbReference type="ChEBI" id="CHEBI:58223"/>
        <dbReference type="ChEBI" id="CHEBI:136931"/>
    </reaction>
    <physiologicalReaction direction="left-to-right" evidence="2">
        <dbReference type="Rhea" id="RHEA:53005"/>
    </physiologicalReaction>
</comment>
<comment type="catalytic activity">
    <reaction evidence="2">
        <text>4-hydroxy-17beta-estradiol + UDP-alpha-D-glucuronate = 17beta-estradiol 4-O-(beta-D-glucuronate) + UDP + H(+)</text>
        <dbReference type="Rhea" id="RHEA:53040"/>
        <dbReference type="ChEBI" id="CHEBI:15378"/>
        <dbReference type="ChEBI" id="CHEBI:58052"/>
        <dbReference type="ChEBI" id="CHEBI:58223"/>
        <dbReference type="ChEBI" id="CHEBI:62845"/>
        <dbReference type="ChEBI" id="CHEBI:136937"/>
    </reaction>
    <physiologicalReaction direction="left-to-right" evidence="2">
        <dbReference type="Rhea" id="RHEA:53041"/>
    </physiologicalReaction>
</comment>
<comment type="catalytic activity">
    <reaction evidence="2">
        <text>4-hydroxyestrone + UDP-alpha-D-glucuronate = estrone 4-O-(beta-D-glucuronate) + UDP + H(+)</text>
        <dbReference type="Rhea" id="RHEA:53060"/>
        <dbReference type="ChEBI" id="CHEBI:15378"/>
        <dbReference type="ChEBI" id="CHEBI:58052"/>
        <dbReference type="ChEBI" id="CHEBI:58223"/>
        <dbReference type="ChEBI" id="CHEBI:87602"/>
        <dbReference type="ChEBI" id="CHEBI:136970"/>
    </reaction>
    <physiologicalReaction direction="left-to-right" evidence="2">
        <dbReference type="Rhea" id="RHEA:53061"/>
    </physiologicalReaction>
</comment>
<comment type="catalytic activity">
    <reaction evidence="2">
        <text>16alpha-hydroxyestrone + UDP-alpha-D-glucuronate = 16alpha-hydroxyestrone 16-O-(beta-D-glucuronate) + UDP + H(+)</text>
        <dbReference type="Rhea" id="RHEA:52452"/>
        <dbReference type="ChEBI" id="CHEBI:776"/>
        <dbReference type="ChEBI" id="CHEBI:15378"/>
        <dbReference type="ChEBI" id="CHEBI:58052"/>
        <dbReference type="ChEBI" id="CHEBI:58223"/>
        <dbReference type="ChEBI" id="CHEBI:136636"/>
    </reaction>
    <physiologicalReaction direction="left-to-right" evidence="2">
        <dbReference type="Rhea" id="RHEA:52453"/>
    </physiologicalReaction>
</comment>
<comment type="catalytic activity">
    <reaction evidence="2">
        <text>16alpha,17beta-estriol + UDP-alpha-D-glucuronate = 16alpha,17beta-estriol 16-O-(beta-D-glucuronate) + UDP + H(+)</text>
        <dbReference type="Rhea" id="RHEA:52472"/>
        <dbReference type="ChEBI" id="CHEBI:15378"/>
        <dbReference type="ChEBI" id="CHEBI:27974"/>
        <dbReference type="ChEBI" id="CHEBI:58052"/>
        <dbReference type="ChEBI" id="CHEBI:58223"/>
        <dbReference type="ChEBI" id="CHEBI:136650"/>
    </reaction>
    <physiologicalReaction direction="left-to-right" evidence="2">
        <dbReference type="Rhea" id="RHEA:52473"/>
    </physiologicalReaction>
</comment>
<comment type="catalytic activity">
    <reaction evidence="2">
        <text>16beta,17beta-estriol + UDP-alpha-D-glucuronate = 16beta,17beta-estriol 16-O-(beta-D-glucuronate) + UDP + H(+)</text>
        <dbReference type="Rhea" id="RHEA:52880"/>
        <dbReference type="ChEBI" id="CHEBI:15378"/>
        <dbReference type="ChEBI" id="CHEBI:58052"/>
        <dbReference type="ChEBI" id="CHEBI:58223"/>
        <dbReference type="ChEBI" id="CHEBI:87620"/>
        <dbReference type="ChEBI" id="CHEBI:136886"/>
    </reaction>
    <physiologicalReaction direction="left-to-right" evidence="2">
        <dbReference type="Rhea" id="RHEA:52881"/>
    </physiologicalReaction>
</comment>
<comment type="catalytic activity">
    <reaction evidence="2">
        <text>16alpha,17alpha-estriol + UDP-alpha-D-glucuronate = 16alpha,17alpha-estriol 16-O-(beta-D-glucuronate) + UDP + H(+)</text>
        <dbReference type="Rhea" id="RHEA:52920"/>
        <dbReference type="ChEBI" id="CHEBI:15378"/>
        <dbReference type="ChEBI" id="CHEBI:42156"/>
        <dbReference type="ChEBI" id="CHEBI:58052"/>
        <dbReference type="ChEBI" id="CHEBI:58223"/>
        <dbReference type="ChEBI" id="CHEBI:136884"/>
    </reaction>
    <physiologicalReaction direction="left-to-right" evidence="2">
        <dbReference type="Rhea" id="RHEA:52921"/>
    </physiologicalReaction>
</comment>
<comment type="catalytic activity">
    <reaction evidence="2">
        <text>16alpha,17alpha-estriol + UDP-alpha-D-glucuronate = 16alpha,17alpha-estriol 17-O-(beta-D-glucuronate) + UDP + H(+)</text>
        <dbReference type="Rhea" id="RHEA:52916"/>
        <dbReference type="ChEBI" id="CHEBI:15378"/>
        <dbReference type="ChEBI" id="CHEBI:42156"/>
        <dbReference type="ChEBI" id="CHEBI:58052"/>
        <dbReference type="ChEBI" id="CHEBI:58223"/>
        <dbReference type="ChEBI" id="CHEBI:136883"/>
    </reaction>
    <physiologicalReaction direction="left-to-right" evidence="2">
        <dbReference type="Rhea" id="RHEA:52917"/>
    </physiologicalReaction>
</comment>
<comment type="catalytic activity">
    <reaction evidence="2">
        <text>epitestosterone + UDP-alpha-D-glucuronate = epitestosterone 17-O-(beta-D-glucuronate) + UDP + H(+)</text>
        <dbReference type="Rhea" id="RHEA:52568"/>
        <dbReference type="ChEBI" id="CHEBI:15378"/>
        <dbReference type="ChEBI" id="CHEBI:42534"/>
        <dbReference type="ChEBI" id="CHEBI:58052"/>
        <dbReference type="ChEBI" id="CHEBI:58223"/>
        <dbReference type="ChEBI" id="CHEBI:136673"/>
    </reaction>
    <physiologicalReaction direction="left-to-right" evidence="2">
        <dbReference type="Rhea" id="RHEA:52569"/>
    </physiologicalReaction>
</comment>
<comment type="catalytic activity">
    <reaction evidence="2">
        <text>hyodeoxycholate + UDP-alpha-D-glucuronate = hyodeoxycholate 6-O-(beta-D-glucuronate) + UDP + H(+)</text>
        <dbReference type="Rhea" id="RHEA:52964"/>
        <dbReference type="ChEBI" id="CHEBI:15378"/>
        <dbReference type="ChEBI" id="CHEBI:58052"/>
        <dbReference type="ChEBI" id="CHEBI:58223"/>
        <dbReference type="ChEBI" id="CHEBI:58875"/>
        <dbReference type="ChEBI" id="CHEBI:136905"/>
    </reaction>
    <physiologicalReaction direction="left-to-right" evidence="2">
        <dbReference type="Rhea" id="RHEA:52965"/>
    </physiologicalReaction>
</comment>
<comment type="catalytic activity">
    <reaction evidence="2">
        <text>hyocholate + UDP-alpha-D-glucuronate = hyocholate 6-O-(beta-D-glucuronate) + UDP + H(+)</text>
        <dbReference type="Rhea" id="RHEA:52968"/>
        <dbReference type="ChEBI" id="CHEBI:15378"/>
        <dbReference type="ChEBI" id="CHEBI:58052"/>
        <dbReference type="ChEBI" id="CHEBI:58223"/>
        <dbReference type="ChEBI" id="CHEBI:133661"/>
        <dbReference type="ChEBI" id="CHEBI:136906"/>
    </reaction>
    <physiologicalReaction direction="left-to-right" evidence="2">
        <dbReference type="Rhea" id="RHEA:52969"/>
    </physiologicalReaction>
</comment>
<comment type="catalytic activity">
    <reaction evidence="2">
        <text>all-trans-retinoate + UDP-alpha-D-glucuronate = all-trans-retinoyl-1-O-(beta-D-glucuronate) + UDP</text>
        <dbReference type="Rhea" id="RHEA:55768"/>
        <dbReference type="ChEBI" id="CHEBI:35291"/>
        <dbReference type="ChEBI" id="CHEBI:58052"/>
        <dbReference type="ChEBI" id="CHEBI:58223"/>
        <dbReference type="ChEBI" id="CHEBI:139181"/>
    </reaction>
    <physiologicalReaction direction="left-to-right" evidence="2">
        <dbReference type="Rhea" id="RHEA:55769"/>
    </physiologicalReaction>
</comment>
<comment type="catalytic activity">
    <reaction evidence="2">
        <text>all-trans-4-hydroxyretinoate + UDP-alpha-D-glucuronate = all-trans-4-hydroxy-4-O-(beta-D-glucuronide)-retinoate + UDP + H(+)</text>
        <dbReference type="Rhea" id="RHEA:55776"/>
        <dbReference type="ChEBI" id="CHEBI:15378"/>
        <dbReference type="ChEBI" id="CHEBI:58052"/>
        <dbReference type="ChEBI" id="CHEBI:58223"/>
        <dbReference type="ChEBI" id="CHEBI:134178"/>
        <dbReference type="ChEBI" id="CHEBI:139182"/>
    </reaction>
    <physiologicalReaction direction="left-to-right" evidence="2">
        <dbReference type="Rhea" id="RHEA:55777"/>
    </physiologicalReaction>
</comment>
<comment type="catalytic activity">
    <reaction evidence="2">
        <text>(E)-ferulate + UDP-alpha-D-glucuronate = (E)-ferulic acid beta-D-glucuronate ester + UDP</text>
        <dbReference type="Rhea" id="RHEA:79955"/>
        <dbReference type="ChEBI" id="CHEBI:29749"/>
        <dbReference type="ChEBI" id="CHEBI:58052"/>
        <dbReference type="ChEBI" id="CHEBI:58223"/>
        <dbReference type="ChEBI" id="CHEBI:231332"/>
    </reaction>
    <physiologicalReaction direction="left-to-right" evidence="2">
        <dbReference type="Rhea" id="RHEA:79956"/>
    </physiologicalReaction>
</comment>
<comment type="catalytic activity">
    <reaction evidence="2">
        <text>8-iso-prostaglandin F2alpha + UDP-alpha-D-glucuronate = 8-iso-prostaglandin F2alpha-glucuronide + UDP + H(+)</text>
        <dbReference type="Rhea" id="RHEA:79907"/>
        <dbReference type="ChEBI" id="CHEBI:15378"/>
        <dbReference type="ChEBI" id="CHEBI:58052"/>
        <dbReference type="ChEBI" id="CHEBI:58223"/>
        <dbReference type="ChEBI" id="CHEBI:77768"/>
        <dbReference type="ChEBI" id="CHEBI:229786"/>
    </reaction>
    <physiologicalReaction direction="left-to-right" evidence="2">
        <dbReference type="Rhea" id="RHEA:79908"/>
    </physiologicalReaction>
</comment>
<comment type="catalytic activity">
    <reaction evidence="2">
        <text>5-epi-5-F2t-IsoP + UDP-alpha-D-glucuronate = 5-epi-5-F2t-IsoP-glucuronide + UDP + H(+)</text>
        <dbReference type="Rhea" id="RHEA:79911"/>
        <dbReference type="ChEBI" id="CHEBI:15378"/>
        <dbReference type="ChEBI" id="CHEBI:58052"/>
        <dbReference type="ChEBI" id="CHEBI:58223"/>
        <dbReference type="ChEBI" id="CHEBI:229787"/>
        <dbReference type="ChEBI" id="CHEBI:229788"/>
    </reaction>
    <physiologicalReaction direction="left-to-right" evidence="2">
        <dbReference type="Rhea" id="RHEA:79912"/>
    </physiologicalReaction>
</comment>
<comment type="catalytic activity">
    <reaction evidence="2">
        <text>(5Z,8Z,11Z,14Z)-eicosatetraenoate + UDP-alpha-D-glucuronate = O-[(5Z),(8Z),(11Z),(14Z)-eicosatetraenoyl]-beta-D-glucuronate + UDP</text>
        <dbReference type="Rhea" id="RHEA:79915"/>
        <dbReference type="ChEBI" id="CHEBI:32395"/>
        <dbReference type="ChEBI" id="CHEBI:58052"/>
        <dbReference type="ChEBI" id="CHEBI:58223"/>
        <dbReference type="ChEBI" id="CHEBI:231327"/>
    </reaction>
    <physiologicalReaction direction="left-to-right" evidence="2">
        <dbReference type="Rhea" id="RHEA:79916"/>
    </physiologicalReaction>
</comment>
<comment type="catalytic activity">
    <reaction evidence="2">
        <text>15-hydroxy-(5Z,8Z,11Z,13E)-eicosatetraenoate + UDP-alpha-D-glucuronate = 15-O-(beta-D-glucuronosyl)-(5Z,8Z,11Z,14Z)-eicosatetraenoate + UDP + H(+)</text>
        <dbReference type="Rhea" id="RHEA:79919"/>
        <dbReference type="ChEBI" id="CHEBI:15378"/>
        <dbReference type="ChEBI" id="CHEBI:58052"/>
        <dbReference type="ChEBI" id="CHEBI:58223"/>
        <dbReference type="ChEBI" id="CHEBI:78832"/>
        <dbReference type="ChEBI" id="CHEBI:231329"/>
    </reaction>
    <physiologicalReaction direction="left-to-right" evidence="2">
        <dbReference type="Rhea" id="RHEA:79920"/>
    </physiologicalReaction>
</comment>
<comment type="catalytic activity">
    <reaction evidence="2">
        <text>20-hydroxy-(5Z,8Z,11Z,14Z)-eicosatetraenoate + UDP-alpha-D-glucuronate = 20-O-(beta-D-glucuronosyl)-(5Z,8Z,11Z,14Z)-eicosatetraenoate + UDP + H(+)</text>
        <dbReference type="Rhea" id="RHEA:79927"/>
        <dbReference type="ChEBI" id="CHEBI:15378"/>
        <dbReference type="ChEBI" id="CHEBI:58052"/>
        <dbReference type="ChEBI" id="CHEBI:58223"/>
        <dbReference type="ChEBI" id="CHEBI:76624"/>
        <dbReference type="ChEBI" id="CHEBI:231328"/>
    </reaction>
    <physiologicalReaction direction="left-to-right" evidence="2">
        <dbReference type="Rhea" id="RHEA:79928"/>
    </physiologicalReaction>
</comment>
<comment type="catalytic activity">
    <reaction evidence="2">
        <text>(E)-ferulate + UDP-alpha-D-glucuronate = (E)-4-O-(beta-D-glucuronosyl)-ferulate + UDP + H(+)</text>
        <dbReference type="Rhea" id="RHEA:79951"/>
        <dbReference type="ChEBI" id="CHEBI:15378"/>
        <dbReference type="ChEBI" id="CHEBI:29749"/>
        <dbReference type="ChEBI" id="CHEBI:58052"/>
        <dbReference type="ChEBI" id="CHEBI:58223"/>
        <dbReference type="ChEBI" id="CHEBI:231331"/>
    </reaction>
    <physiologicalReaction direction="left-to-right" evidence="2">
        <dbReference type="Rhea" id="RHEA:79952"/>
    </physiologicalReaction>
</comment>
<comment type="catalytic activity">
    <reaction evidence="2">
        <text>prostaglandin B1 + UDP-alpha-D-glucuronate = 15-O-(beta-D-glucuronosyl)-prostaglandin B1 + UDP + H(+)</text>
        <dbReference type="Rhea" id="RHEA:79935"/>
        <dbReference type="ChEBI" id="CHEBI:15378"/>
        <dbReference type="ChEBI" id="CHEBI:58052"/>
        <dbReference type="ChEBI" id="CHEBI:58223"/>
        <dbReference type="ChEBI" id="CHEBI:133393"/>
        <dbReference type="ChEBI" id="CHEBI:231330"/>
    </reaction>
    <physiologicalReaction direction="left-to-right" evidence="2">
        <dbReference type="Rhea" id="RHEA:79936"/>
    </physiologicalReaction>
</comment>
<comment type="catalytic activity">
    <reaction evidence="2">
        <text>mycophenolate + UDP-alpha-D-glucuronate = mycophenolic acid O-acyl-beta-D-glucuronide + UDP</text>
        <dbReference type="Rhea" id="RHEA:63700"/>
        <dbReference type="ChEBI" id="CHEBI:58052"/>
        <dbReference type="ChEBI" id="CHEBI:58223"/>
        <dbReference type="ChEBI" id="CHEBI:62932"/>
        <dbReference type="ChEBI" id="CHEBI:66982"/>
    </reaction>
    <physiologicalReaction direction="left-to-right" evidence="2">
        <dbReference type="Rhea" id="RHEA:63701"/>
    </physiologicalReaction>
</comment>
<comment type="catalytic activity">
    <reaction evidence="2">
        <text>losartan + UDP-alpha-D-glucuronate = losartan-2-N-beta-D-glucuronide + UDP</text>
        <dbReference type="Rhea" id="RHEA:63720"/>
        <dbReference type="ChEBI" id="CHEBI:58052"/>
        <dbReference type="ChEBI" id="CHEBI:58223"/>
        <dbReference type="ChEBI" id="CHEBI:149504"/>
        <dbReference type="ChEBI" id="CHEBI:149507"/>
    </reaction>
    <physiologicalReaction direction="left-to-right" evidence="2">
        <dbReference type="Rhea" id="RHEA:63721"/>
    </physiologicalReaction>
</comment>
<comment type="catalytic activity">
    <reaction evidence="2">
        <text>candesartan + UDP-alpha-D-glucuronate = candesartan O-beta-D-glucuronoside + UDP</text>
        <dbReference type="Rhea" id="RHEA:63724"/>
        <dbReference type="ChEBI" id="CHEBI:58052"/>
        <dbReference type="ChEBI" id="CHEBI:58223"/>
        <dbReference type="ChEBI" id="CHEBI:149509"/>
        <dbReference type="ChEBI" id="CHEBI:149522"/>
    </reaction>
    <physiologicalReaction direction="left-to-right" evidence="2">
        <dbReference type="Rhea" id="RHEA:63725"/>
    </physiologicalReaction>
</comment>
<comment type="catalytic activity">
    <reaction evidence="2">
        <text>candesartan + UDP-alpha-D-glucuronate = candesartan-2-N-beta-D-glucuronide + UDP</text>
        <dbReference type="Rhea" id="RHEA:63728"/>
        <dbReference type="ChEBI" id="CHEBI:58052"/>
        <dbReference type="ChEBI" id="CHEBI:58223"/>
        <dbReference type="ChEBI" id="CHEBI:149509"/>
        <dbReference type="ChEBI" id="CHEBI:149523"/>
    </reaction>
    <physiologicalReaction direction="left-to-right" evidence="2">
        <dbReference type="Rhea" id="RHEA:63729"/>
    </physiologicalReaction>
</comment>
<comment type="catalytic activity">
    <reaction evidence="2">
        <text>zolasartan + UDP-alpha-D-glucuronate = zolarsartan O-beta-D-glucuronoside + UDP</text>
        <dbReference type="Rhea" id="RHEA:63732"/>
        <dbReference type="ChEBI" id="CHEBI:58052"/>
        <dbReference type="ChEBI" id="CHEBI:58223"/>
        <dbReference type="ChEBI" id="CHEBI:149524"/>
        <dbReference type="ChEBI" id="CHEBI:149526"/>
    </reaction>
    <physiologicalReaction direction="left-to-right" evidence="2">
        <dbReference type="Rhea" id="RHEA:63733"/>
    </physiologicalReaction>
</comment>
<comment type="subcellular location">
    <subcellularLocation>
        <location evidence="2">Endoplasmic reticulum membrane</location>
        <topology evidence="3">Single-pass membrane protein</topology>
    </subcellularLocation>
</comment>
<comment type="similarity">
    <text evidence="4">Belongs to the UDP-glycosyltransferase family.</text>
</comment>
<protein>
    <recommendedName>
        <fullName evidence="2">UDP-glucuronosyltransferase 2B7</fullName>
        <shortName>UDPGT 2B7</shortName>
        <shortName evidence="2">UGT2B7</shortName>
        <ecNumber evidence="2">2.4.1.17</ecNumber>
    </recommendedName>
    <alternativeName>
        <fullName>UGT2B-RH4</fullName>
    </alternativeName>
</protein>
<keyword id="KW-0256">Endoplasmic reticulum</keyword>
<keyword id="KW-0325">Glycoprotein</keyword>
<keyword id="KW-0328">Glycosyltransferase</keyword>
<keyword id="KW-0443">Lipid metabolism</keyword>
<keyword id="KW-0472">Membrane</keyword>
<keyword id="KW-1185">Reference proteome</keyword>
<keyword id="KW-0732">Signal</keyword>
<keyword id="KW-0753">Steroid metabolism</keyword>
<keyword id="KW-0808">Transferase</keyword>
<keyword id="KW-0812">Transmembrane</keyword>
<keyword id="KW-1133">Transmembrane helix</keyword>
<organism>
    <name type="scientific">Rattus norvegicus</name>
    <name type="common">Rat</name>
    <dbReference type="NCBI Taxonomy" id="10116"/>
    <lineage>
        <taxon>Eukaryota</taxon>
        <taxon>Metazoa</taxon>
        <taxon>Chordata</taxon>
        <taxon>Craniata</taxon>
        <taxon>Vertebrata</taxon>
        <taxon>Euteleostomi</taxon>
        <taxon>Mammalia</taxon>
        <taxon>Eutheria</taxon>
        <taxon>Euarchontoglires</taxon>
        <taxon>Glires</taxon>
        <taxon>Rodentia</taxon>
        <taxon>Myomorpha</taxon>
        <taxon>Muroidea</taxon>
        <taxon>Muridae</taxon>
        <taxon>Murinae</taxon>
        <taxon>Rattus</taxon>
    </lineage>
</organism>
<dbReference type="EC" id="2.4.1.17" evidence="2"/>
<dbReference type="EMBL" id="U27518">
    <property type="protein sequence ID" value="AAA86833.1"/>
    <property type="molecule type" value="mRNA"/>
</dbReference>
<dbReference type="RefSeq" id="NP_775445.1">
    <property type="nucleotide sequence ID" value="NM_173323.1"/>
</dbReference>
<dbReference type="SMR" id="Q62789"/>
<dbReference type="FunCoup" id="Q62789">
    <property type="interactions" value="228"/>
</dbReference>
<dbReference type="CAZy" id="GT1">
    <property type="family name" value="Glycosyltransferase Family 1"/>
</dbReference>
<dbReference type="GlyCosmos" id="Q62789">
    <property type="glycosylation" value="1 site, No reported glycans"/>
</dbReference>
<dbReference type="GlyGen" id="Q62789">
    <property type="glycosylation" value="1 site"/>
</dbReference>
<dbReference type="PhosphoSitePlus" id="Q62789"/>
<dbReference type="GeneID" id="286989"/>
<dbReference type="KEGG" id="rno:286989"/>
<dbReference type="UCSC" id="RGD:708417">
    <property type="organism name" value="rat"/>
</dbReference>
<dbReference type="AGR" id="RGD:708417"/>
<dbReference type="CTD" id="7364"/>
<dbReference type="RGD" id="708417">
    <property type="gene designation" value="Ugt2b7"/>
</dbReference>
<dbReference type="InParanoid" id="Q62789"/>
<dbReference type="PhylomeDB" id="Q62789"/>
<dbReference type="BRENDA" id="2.4.1.17">
    <property type="organism ID" value="5301"/>
</dbReference>
<dbReference type="Reactome" id="R-RNO-156588">
    <property type="pathway name" value="Glucuronidation"/>
</dbReference>
<dbReference type="Reactome" id="R-RNO-9749641">
    <property type="pathway name" value="Aspirin ADME"/>
</dbReference>
<dbReference type="Reactome" id="R-RNO-9753281">
    <property type="pathway name" value="Paracetamol ADME"/>
</dbReference>
<dbReference type="Reactome" id="R-RNO-9757110">
    <property type="pathway name" value="Prednisone ADME"/>
</dbReference>
<dbReference type="PRO" id="PR:Q62789"/>
<dbReference type="Proteomes" id="UP000002494">
    <property type="component" value="Unplaced"/>
</dbReference>
<dbReference type="GO" id="GO:0005789">
    <property type="term" value="C:endoplasmic reticulum membrane"/>
    <property type="evidence" value="ECO:0007669"/>
    <property type="project" value="UniProtKB-SubCell"/>
</dbReference>
<dbReference type="GO" id="GO:0015020">
    <property type="term" value="F:glucuronosyltransferase activity"/>
    <property type="evidence" value="ECO:0000250"/>
    <property type="project" value="UniProtKB"/>
</dbReference>
<dbReference type="GO" id="GO:0008209">
    <property type="term" value="P:androgen metabolic process"/>
    <property type="evidence" value="ECO:0000250"/>
    <property type="project" value="UniProtKB"/>
</dbReference>
<dbReference type="GO" id="GO:0008210">
    <property type="term" value="P:estrogen metabolic process"/>
    <property type="evidence" value="ECO:0000250"/>
    <property type="project" value="UniProtKB"/>
</dbReference>
<dbReference type="GO" id="GO:0006805">
    <property type="term" value="P:xenobiotic metabolic process"/>
    <property type="evidence" value="ECO:0000266"/>
    <property type="project" value="RGD"/>
</dbReference>
<dbReference type="CDD" id="cd03784">
    <property type="entry name" value="GT1_Gtf-like"/>
    <property type="match status" value="1"/>
</dbReference>
<dbReference type="FunFam" id="3.40.50.2000:FF:000001">
    <property type="entry name" value="UDP-glucuronosyltransferase"/>
    <property type="match status" value="1"/>
</dbReference>
<dbReference type="FunFam" id="3.40.50.2000:FF:000081">
    <property type="entry name" value="UDP-glucuronosyltransferase 2A2"/>
    <property type="match status" value="1"/>
</dbReference>
<dbReference type="Gene3D" id="3.40.50.2000">
    <property type="entry name" value="Glycogen Phosphorylase B"/>
    <property type="match status" value="2"/>
</dbReference>
<dbReference type="InterPro" id="IPR050271">
    <property type="entry name" value="UDP-glycosyltransferase"/>
</dbReference>
<dbReference type="InterPro" id="IPR002213">
    <property type="entry name" value="UDP_glucos_trans"/>
</dbReference>
<dbReference type="InterPro" id="IPR035595">
    <property type="entry name" value="UDP_glycos_trans_CS"/>
</dbReference>
<dbReference type="PANTHER" id="PTHR48043">
    <property type="entry name" value="EG:EG0003.4 PROTEIN-RELATED"/>
    <property type="match status" value="1"/>
</dbReference>
<dbReference type="PANTHER" id="PTHR48043:SF64">
    <property type="entry name" value="UDP-GLUCURONOSYLTRANSFERASE 2B15"/>
    <property type="match status" value="1"/>
</dbReference>
<dbReference type="Pfam" id="PF00201">
    <property type="entry name" value="UDPGT"/>
    <property type="match status" value="1"/>
</dbReference>
<dbReference type="SUPFAM" id="SSF53756">
    <property type="entry name" value="UDP-Glycosyltransferase/glycogen phosphorylase"/>
    <property type="match status" value="1"/>
</dbReference>
<dbReference type="PROSITE" id="PS00375">
    <property type="entry name" value="UDPGT"/>
    <property type="match status" value="1"/>
</dbReference>
<feature type="signal peptide" evidence="1">
    <location>
        <begin position="1"/>
        <end position="17"/>
    </location>
</feature>
<feature type="chain" id="PRO_0000036032" description="UDP-glucuronosyltransferase 2B7">
    <location>
        <begin position="18"/>
        <end position="530"/>
    </location>
</feature>
<feature type="transmembrane region" description="Helical" evidence="3">
    <location>
        <begin position="496"/>
        <end position="516"/>
    </location>
</feature>
<feature type="binding site" evidence="1">
    <location>
        <begin position="374"/>
        <end position="380"/>
    </location>
    <ligand>
        <name>UDP-alpha-D-glucuronate</name>
        <dbReference type="ChEBI" id="CHEBI:58052"/>
    </ligand>
</feature>
<feature type="binding site" evidence="1">
    <location>
        <position position="400"/>
    </location>
    <ligand>
        <name>UDP-alpha-D-glucuronate</name>
        <dbReference type="ChEBI" id="CHEBI:58052"/>
    </ligand>
</feature>
<feature type="glycosylation site" description="N-linked (GlcNAc...) asparagine" evidence="3">
    <location>
        <position position="316"/>
    </location>
</feature>
<name>UD2B7_RAT</name>
<evidence type="ECO:0000250" key="1"/>
<evidence type="ECO:0000250" key="2">
    <source>
        <dbReference type="UniProtKB" id="P16662"/>
    </source>
</evidence>
<evidence type="ECO:0000255" key="3"/>
<evidence type="ECO:0000305" key="4"/>
<evidence type="ECO:0000312" key="5">
    <source>
        <dbReference type="RGD" id="708417"/>
    </source>
</evidence>
<reference key="1">
    <citation type="submission" date="1995-05" db="EMBL/GenBank/DDBJ databases">
        <title>A novel member of the UDPGT family is abundantly expressed in H4IIEC3 hepatoma cells.</title>
        <authorList>
            <person name="Cohen H."/>
            <person name="Trus M."/>
            <person name="Benvenisty N."/>
            <person name="Reshef L."/>
        </authorList>
    </citation>
    <scope>NUCLEOTIDE SEQUENCE [MRNA]</scope>
    <source>
        <tissue>Hepatoma</tissue>
    </source>
</reference>
<gene>
    <name evidence="5" type="primary">Ugt2b7</name>
    <name type="synonym">Ugt2b8</name>
</gene>
<accession>Q62789</accession>
<proteinExistence type="evidence at transcript level"/>